<feature type="chain" id="PRO_0000129107" description="Surface presentation of antigens protein SpaQ">
    <location>
        <begin position="1"/>
        <end position="86"/>
    </location>
</feature>
<feature type="transmembrane region" description="Helical" evidence="1">
    <location>
        <begin position="16"/>
        <end position="36"/>
    </location>
</feature>
<feature type="transmembrane region" description="Helical" evidence="1">
    <location>
        <begin position="53"/>
        <end position="73"/>
    </location>
</feature>
<evidence type="ECO:0000255" key="1"/>
<evidence type="ECO:0000305" key="2"/>
<gene>
    <name type="primary">spaQ</name>
</gene>
<name>SPAQ_SALTP</name>
<accession>P0A1M3</accession>
<accession>P40704</accession>
<accession>Q54011</accession>
<accession>Q54013</accession>
<accession>Q57117</accession>
<accession>Q57533</accession>
<keyword id="KW-1003">Cell membrane</keyword>
<keyword id="KW-0472">Membrane</keyword>
<keyword id="KW-0812">Transmembrane</keyword>
<keyword id="KW-1133">Transmembrane helix</keyword>
<keyword id="KW-0843">Virulence</keyword>
<sequence>MDDLVFAGNKALYLVLILSGWPTIVATIIGLLVGLFQTVTQLQEQTLPFGIKLLGVCLCLFLLSGWYGEVLLSYGRQVIFLALAKG</sequence>
<reference key="1">
    <citation type="journal article" date="1995" name="Proc. Natl. Acad. Sci. U.S.A.">
        <title>Relationship between evolutionary rate and cellular location among the Inv/Spa invasion proteins of Salmonella enterica.</title>
        <authorList>
            <person name="Li J."/>
            <person name="Ochman H."/>
            <person name="Groisman E.A."/>
            <person name="Boyd E.F."/>
            <person name="Solomon F."/>
            <person name="Nelson K."/>
            <person name="Selander R.K."/>
        </authorList>
    </citation>
    <scope>NUCLEOTIDE SEQUENCE [GENOMIC DNA]</scope>
    <source>
        <strain>s3134</strain>
    </source>
</reference>
<comment type="function">
    <text>Involved in a secretory pathway responsible for the surface presentation of determinants needed for the entry of Salmonella species into mammalian cells.</text>
</comment>
<comment type="subcellular location">
    <subcellularLocation>
        <location evidence="2">Cell membrane</location>
        <topology evidence="2">Multi-pass membrane protein</topology>
    </subcellularLocation>
</comment>
<comment type="similarity">
    <text evidence="2">Belongs to the FliQ/MopD/SpaQ family.</text>
</comment>
<dbReference type="EMBL" id="U29362">
    <property type="protein sequence ID" value="AAC43859.1"/>
    <property type="molecule type" value="Genomic_DNA"/>
</dbReference>
<dbReference type="SMR" id="P0A1M3"/>
<dbReference type="GO" id="GO:0005886">
    <property type="term" value="C:plasma membrane"/>
    <property type="evidence" value="ECO:0007669"/>
    <property type="project" value="UniProtKB-SubCell"/>
</dbReference>
<dbReference type="GO" id="GO:0009306">
    <property type="term" value="P:protein secretion"/>
    <property type="evidence" value="ECO:0007669"/>
    <property type="project" value="InterPro"/>
</dbReference>
<dbReference type="InterPro" id="IPR002191">
    <property type="entry name" value="Bac_export_3"/>
</dbReference>
<dbReference type="InterPro" id="IPR006306">
    <property type="entry name" value="T3SS_HrpO"/>
</dbReference>
<dbReference type="NCBIfam" id="TIGR01403">
    <property type="entry name" value="fliQ_rel_III"/>
    <property type="match status" value="1"/>
</dbReference>
<dbReference type="NCBIfam" id="NF011861">
    <property type="entry name" value="PRK15333.1"/>
    <property type="match status" value="1"/>
</dbReference>
<dbReference type="PANTHER" id="PTHR34040">
    <property type="entry name" value="FLAGELLAR BIOSYNTHETIC PROTEIN FLIQ"/>
    <property type="match status" value="1"/>
</dbReference>
<dbReference type="PANTHER" id="PTHR34040:SF7">
    <property type="entry name" value="SURFACE PRESENTATION OF ANTIGENS PROTEIN SPAQ"/>
    <property type="match status" value="1"/>
</dbReference>
<dbReference type="Pfam" id="PF01313">
    <property type="entry name" value="Bac_export_3"/>
    <property type="match status" value="1"/>
</dbReference>
<dbReference type="PRINTS" id="PR00952">
    <property type="entry name" value="TYPE3IMQPROT"/>
</dbReference>
<protein>
    <recommendedName>
        <fullName>Surface presentation of antigens protein SpaQ</fullName>
    </recommendedName>
</protein>
<proteinExistence type="inferred from homology"/>
<organism>
    <name type="scientific">Salmonella typhisuis</name>
    <dbReference type="NCBI Taxonomy" id="41529"/>
    <lineage>
        <taxon>Bacteria</taxon>
        <taxon>Pseudomonadati</taxon>
        <taxon>Pseudomonadota</taxon>
        <taxon>Gammaproteobacteria</taxon>
        <taxon>Enterobacterales</taxon>
        <taxon>Enterobacteriaceae</taxon>
        <taxon>Salmonella</taxon>
    </lineage>
</organism>